<evidence type="ECO:0000255" key="1">
    <source>
        <dbReference type="HAMAP-Rule" id="MF_00936"/>
    </source>
</evidence>
<evidence type="ECO:0000255" key="2">
    <source>
        <dbReference type="PROSITE-ProRule" id="PRU01384"/>
    </source>
</evidence>
<protein>
    <recommendedName>
        <fullName evidence="1">DNA topoisomerase 4 subunit A</fullName>
        <ecNumber evidence="1">5.6.2.2</ecNumber>
    </recommendedName>
    <alternativeName>
        <fullName evidence="1">Topoisomerase IV subunit A</fullName>
    </alternativeName>
</protein>
<keyword id="KW-1003">Cell membrane</keyword>
<keyword id="KW-0238">DNA-binding</keyword>
<keyword id="KW-0413">Isomerase</keyword>
<keyword id="KW-0472">Membrane</keyword>
<keyword id="KW-1185">Reference proteome</keyword>
<keyword id="KW-0799">Topoisomerase</keyword>
<reference key="1">
    <citation type="journal article" date="1995" name="Science">
        <title>Whole-genome random sequencing and assembly of Haemophilus influenzae Rd.</title>
        <authorList>
            <person name="Fleischmann R.D."/>
            <person name="Adams M.D."/>
            <person name="White O."/>
            <person name="Clayton R.A."/>
            <person name="Kirkness E.F."/>
            <person name="Kerlavage A.R."/>
            <person name="Bult C.J."/>
            <person name="Tomb J.-F."/>
            <person name="Dougherty B.A."/>
            <person name="Merrick J.M."/>
            <person name="McKenney K."/>
            <person name="Sutton G.G."/>
            <person name="FitzHugh W."/>
            <person name="Fields C.A."/>
            <person name="Gocayne J.D."/>
            <person name="Scott J.D."/>
            <person name="Shirley R."/>
            <person name="Liu L.-I."/>
            <person name="Glodek A."/>
            <person name="Kelley J.M."/>
            <person name="Weidman J.F."/>
            <person name="Phillips C.A."/>
            <person name="Spriggs T."/>
            <person name="Hedblom E."/>
            <person name="Cotton M.D."/>
            <person name="Utterback T.R."/>
            <person name="Hanna M.C."/>
            <person name="Nguyen D.T."/>
            <person name="Saudek D.M."/>
            <person name="Brandon R.C."/>
            <person name="Fine L.D."/>
            <person name="Fritchman J.L."/>
            <person name="Fuhrmann J.L."/>
            <person name="Geoghagen N.S.M."/>
            <person name="Gnehm C.L."/>
            <person name="McDonald L.A."/>
            <person name="Small K.V."/>
            <person name="Fraser C.M."/>
            <person name="Smith H.O."/>
            <person name="Venter J.C."/>
        </authorList>
    </citation>
    <scope>NUCLEOTIDE SEQUENCE [LARGE SCALE GENOMIC DNA]</scope>
    <source>
        <strain>ATCC 51907 / DSM 11121 / KW20 / Rd</strain>
    </source>
</reference>
<name>PARC_HAEIN</name>
<sequence>MTNINYEGIEQMPLRTFTEKAYLNYSMYVIMDRALPFIGDGLKPVQRRIVYAMSELGLNATAKYKKSARTVGDVLGKFHPHGDSACYEAMVLMAQPFSYRYPLVDGQGNWGAPDDPKSFAAMRYTESRLSKISEILLNELGQGTVDYQPNFDGTLAEPQYLPARLPHILLNGTTGIAVGMATDIPPHNINEIADAAVMLLDNPKAGLDDVLEIVQGPDFPTEAEIISPKSEIRKIYEQGRGSIKMRATWKKEDGEIIISALPHQSSPSKVIAQIAEQMTAKKLPMLEDIRDEADHENPIRIVLVPRSNRVDTDALMAHLFATTDLEKSYRVNMNMIGLDHKPAVKGLLEILNEWLDFRRTTVTRRLQYRLDKVLSRLHILEGLMIAFLNIDEVIEIIRHEDDPKAELMARFNLSDEQADAILNLRLRHLAKLEENQLKAEQDELEKERLNLEAILGSERRLNTLIKKEIQEDAKKYANPRMSQLVEREEAKMISESDMTPAEPVTVILSEMGWVRCAKGHDIDPKSLSYKAGDSYLAHACGKSNQAVVFIDSTGRSYALDPLSLPSARSQGEPLTGKLNLPTGATIEYVVMASEQQELLMASDAGYGFICKFEDLIARNKAGKALISLPENAKVLKPKTLINSTALVVAITSAGRMLIFPAQDLPVLSKGKGNKMITIPAANAKDRSELLTKLLLISDQASLEFYSGKRKIVLKPEDLQKFRAERGRKGSTLPRGLHTNLEIMVIEP</sequence>
<gene>
    <name evidence="1" type="primary">parC</name>
    <name type="ordered locus">HI_1529</name>
</gene>
<dbReference type="EC" id="5.6.2.2" evidence="1"/>
<dbReference type="EMBL" id="L42023">
    <property type="protein sequence ID" value="AAC23175.1"/>
    <property type="molecule type" value="Genomic_DNA"/>
</dbReference>
<dbReference type="PIR" id="F64127">
    <property type="entry name" value="F64127"/>
</dbReference>
<dbReference type="RefSeq" id="NP_439678.1">
    <property type="nucleotide sequence ID" value="NC_000907.1"/>
</dbReference>
<dbReference type="SMR" id="P43702"/>
<dbReference type="STRING" id="71421.HI_1529"/>
<dbReference type="DrugBank" id="DB06771">
    <property type="generic name" value="Besifloxacin"/>
</dbReference>
<dbReference type="DrugBank" id="DB00537">
    <property type="generic name" value="Ciprofloxacin"/>
</dbReference>
<dbReference type="DrugBank" id="DB00467">
    <property type="generic name" value="Enoxacin"/>
</dbReference>
<dbReference type="DrugBank" id="DB09047">
    <property type="generic name" value="Finafloxacin"/>
</dbReference>
<dbReference type="DrugBank" id="DB04576">
    <property type="generic name" value="Fleroxacin"/>
</dbReference>
<dbReference type="DrugBank" id="DB01155">
    <property type="generic name" value="Gemifloxacin"/>
</dbReference>
<dbReference type="DrugBank" id="DB00365">
    <property type="generic name" value="Grepafloxacin"/>
</dbReference>
<dbReference type="DrugBank" id="DB01137">
    <property type="generic name" value="Levofloxacin"/>
</dbReference>
<dbReference type="DrugBank" id="DB00978">
    <property type="generic name" value="Lomefloxacin"/>
</dbReference>
<dbReference type="DrugBank" id="DB00218">
    <property type="generic name" value="Moxifloxacin"/>
</dbReference>
<dbReference type="DrugBank" id="DB01059">
    <property type="generic name" value="Norfloxacin"/>
</dbReference>
<dbReference type="DrugBank" id="DB01165">
    <property type="generic name" value="Ofloxacin"/>
</dbReference>
<dbReference type="DrugBank" id="DB00487">
    <property type="generic name" value="Pefloxacin"/>
</dbReference>
<dbReference type="DrugBank" id="DB01208">
    <property type="generic name" value="Sparfloxacin"/>
</dbReference>
<dbReference type="DrugBank" id="DB01405">
    <property type="generic name" value="Temafloxacin"/>
</dbReference>
<dbReference type="DrugBank" id="DB00685">
    <property type="generic name" value="Trovafloxacin"/>
</dbReference>
<dbReference type="EnsemblBacteria" id="AAC23175">
    <property type="protein sequence ID" value="AAC23175"/>
    <property type="gene ID" value="HI_1529"/>
</dbReference>
<dbReference type="KEGG" id="hin:HI_1529"/>
<dbReference type="PATRIC" id="fig|71421.8.peg.1600"/>
<dbReference type="eggNOG" id="COG0188">
    <property type="taxonomic scope" value="Bacteria"/>
</dbReference>
<dbReference type="HOGENOM" id="CLU_002977_4_1_6"/>
<dbReference type="OrthoDB" id="9806486at2"/>
<dbReference type="PhylomeDB" id="P43702"/>
<dbReference type="BioCyc" id="HINF71421:G1GJ1-1551-MONOMER"/>
<dbReference type="Proteomes" id="UP000000579">
    <property type="component" value="Chromosome"/>
</dbReference>
<dbReference type="GO" id="GO:0005694">
    <property type="term" value="C:chromosome"/>
    <property type="evidence" value="ECO:0007669"/>
    <property type="project" value="InterPro"/>
</dbReference>
<dbReference type="GO" id="GO:0005737">
    <property type="term" value="C:cytoplasm"/>
    <property type="evidence" value="ECO:0000318"/>
    <property type="project" value="GO_Central"/>
</dbReference>
<dbReference type="GO" id="GO:0009330">
    <property type="term" value="C:DNA topoisomerase type II (double strand cut, ATP-hydrolyzing) complex"/>
    <property type="evidence" value="ECO:0000318"/>
    <property type="project" value="GO_Central"/>
</dbReference>
<dbReference type="GO" id="GO:0019897">
    <property type="term" value="C:extrinsic component of plasma membrane"/>
    <property type="evidence" value="ECO:0007669"/>
    <property type="project" value="UniProtKB-UniRule"/>
</dbReference>
<dbReference type="GO" id="GO:0005524">
    <property type="term" value="F:ATP binding"/>
    <property type="evidence" value="ECO:0000318"/>
    <property type="project" value="GO_Central"/>
</dbReference>
<dbReference type="GO" id="GO:0003677">
    <property type="term" value="F:DNA binding"/>
    <property type="evidence" value="ECO:0000318"/>
    <property type="project" value="GO_Central"/>
</dbReference>
<dbReference type="GO" id="GO:0003918">
    <property type="term" value="F:DNA topoisomerase type II (double strand cut, ATP-hydrolyzing) activity"/>
    <property type="evidence" value="ECO:0007669"/>
    <property type="project" value="UniProtKB-UniRule"/>
</dbReference>
<dbReference type="GO" id="GO:0007059">
    <property type="term" value="P:chromosome segregation"/>
    <property type="evidence" value="ECO:0000318"/>
    <property type="project" value="GO_Central"/>
</dbReference>
<dbReference type="GO" id="GO:0006265">
    <property type="term" value="P:DNA topological change"/>
    <property type="evidence" value="ECO:0000318"/>
    <property type="project" value="GO_Central"/>
</dbReference>
<dbReference type="CDD" id="cd00187">
    <property type="entry name" value="TOP4c"/>
    <property type="match status" value="1"/>
</dbReference>
<dbReference type="FunFam" id="1.10.268.10:FF:000001">
    <property type="entry name" value="DNA gyrase subunit A"/>
    <property type="match status" value="1"/>
</dbReference>
<dbReference type="FunFam" id="2.120.10.90:FF:000003">
    <property type="entry name" value="DNA topoisomerase 4 subunit A"/>
    <property type="match status" value="1"/>
</dbReference>
<dbReference type="FunFam" id="3.30.1360.40:FF:000005">
    <property type="entry name" value="DNA topoisomerase 4 subunit A"/>
    <property type="match status" value="1"/>
</dbReference>
<dbReference type="Gene3D" id="3.30.1360.40">
    <property type="match status" value="1"/>
</dbReference>
<dbReference type="Gene3D" id="2.120.10.90">
    <property type="entry name" value="DNA gyrase/topoisomerase IV, subunit A, C-terminal"/>
    <property type="match status" value="1"/>
</dbReference>
<dbReference type="Gene3D" id="3.90.199.10">
    <property type="entry name" value="Topoisomerase II, domain 5"/>
    <property type="match status" value="1"/>
</dbReference>
<dbReference type="Gene3D" id="1.10.268.10">
    <property type="entry name" value="Topoisomerase, domain 3"/>
    <property type="match status" value="1"/>
</dbReference>
<dbReference type="HAMAP" id="MF_00936">
    <property type="entry name" value="ParC_type1"/>
    <property type="match status" value="1"/>
</dbReference>
<dbReference type="InterPro" id="IPR006691">
    <property type="entry name" value="GyrA/parC_rep"/>
</dbReference>
<dbReference type="InterPro" id="IPR035516">
    <property type="entry name" value="Gyrase/topoIV_suA_C"/>
</dbReference>
<dbReference type="InterPro" id="IPR013760">
    <property type="entry name" value="Topo_IIA-like_dom_sf"/>
</dbReference>
<dbReference type="InterPro" id="IPR013758">
    <property type="entry name" value="Topo_IIA_A/C_ab"/>
</dbReference>
<dbReference type="InterPro" id="IPR013757">
    <property type="entry name" value="Topo_IIA_A_a_sf"/>
</dbReference>
<dbReference type="InterPro" id="IPR002205">
    <property type="entry name" value="Topo_IIA_dom_A"/>
</dbReference>
<dbReference type="InterPro" id="IPR005742">
    <property type="entry name" value="TopoIV_A_Gneg"/>
</dbReference>
<dbReference type="InterPro" id="IPR050220">
    <property type="entry name" value="Type_II_DNA_Topoisomerases"/>
</dbReference>
<dbReference type="NCBIfam" id="TIGR01062">
    <property type="entry name" value="parC_Gneg"/>
    <property type="match status" value="1"/>
</dbReference>
<dbReference type="NCBIfam" id="NF004044">
    <property type="entry name" value="PRK05561.1"/>
    <property type="match status" value="1"/>
</dbReference>
<dbReference type="PANTHER" id="PTHR43493">
    <property type="entry name" value="DNA GYRASE/TOPOISOMERASE SUBUNIT A"/>
    <property type="match status" value="1"/>
</dbReference>
<dbReference type="PANTHER" id="PTHR43493:SF1">
    <property type="entry name" value="DNA TOPOISOMERASE 4 SUBUNIT A"/>
    <property type="match status" value="1"/>
</dbReference>
<dbReference type="Pfam" id="PF03989">
    <property type="entry name" value="DNA_gyraseA_C"/>
    <property type="match status" value="2"/>
</dbReference>
<dbReference type="Pfam" id="PF00521">
    <property type="entry name" value="DNA_topoisoIV"/>
    <property type="match status" value="1"/>
</dbReference>
<dbReference type="SMART" id="SM00434">
    <property type="entry name" value="TOP4c"/>
    <property type="match status" value="1"/>
</dbReference>
<dbReference type="SUPFAM" id="SSF101904">
    <property type="entry name" value="GyrA/ParC C-terminal domain-like"/>
    <property type="match status" value="1"/>
</dbReference>
<dbReference type="SUPFAM" id="SSF56719">
    <property type="entry name" value="Type II DNA topoisomerase"/>
    <property type="match status" value="1"/>
</dbReference>
<dbReference type="PROSITE" id="PS52040">
    <property type="entry name" value="TOPO_IIA"/>
    <property type="match status" value="1"/>
</dbReference>
<comment type="function">
    <text evidence="1">Topoisomerase IV is essential for chromosome segregation. It relaxes supercoiled DNA. Performs the decatenation events required during the replication of a circular DNA molecule.</text>
</comment>
<comment type="catalytic activity">
    <reaction evidence="1">
        <text>ATP-dependent breakage, passage and rejoining of double-stranded DNA.</text>
        <dbReference type="EC" id="5.6.2.2"/>
    </reaction>
</comment>
<comment type="subunit">
    <text evidence="1">Heterotetramer composed of ParC and ParE.</text>
</comment>
<comment type="subcellular location">
    <subcellularLocation>
        <location evidence="1">Cell membrane</location>
        <topology evidence="1">Peripheral membrane protein</topology>
    </subcellularLocation>
</comment>
<comment type="similarity">
    <text evidence="1">Belongs to the type II topoisomerase GyrA/ParC subunit family. ParC type 1 subfamily.</text>
</comment>
<proteinExistence type="inferred from homology"/>
<feature type="chain" id="PRO_0000145400" description="DNA topoisomerase 4 subunit A">
    <location>
        <begin position="1"/>
        <end position="747"/>
    </location>
</feature>
<feature type="domain" description="Topo IIA-type catalytic" evidence="2">
    <location>
        <begin position="35"/>
        <end position="498"/>
    </location>
</feature>
<feature type="active site" description="O-(5'-phospho-DNA)-tyrosine intermediate" evidence="1">
    <location>
        <position position="124"/>
    </location>
</feature>
<feature type="site" description="Interaction with DNA" evidence="1">
    <location>
        <position position="43"/>
    </location>
</feature>
<feature type="site" description="Interaction with DNA" evidence="1">
    <location>
        <position position="79"/>
    </location>
</feature>
<feature type="site" description="Interaction with DNA" evidence="1">
    <location>
        <position position="81"/>
    </location>
</feature>
<feature type="site" description="Transition state stabilizer" evidence="1">
    <location>
        <position position="123"/>
    </location>
</feature>
<organism>
    <name type="scientific">Haemophilus influenzae (strain ATCC 51907 / DSM 11121 / KW20 / Rd)</name>
    <dbReference type="NCBI Taxonomy" id="71421"/>
    <lineage>
        <taxon>Bacteria</taxon>
        <taxon>Pseudomonadati</taxon>
        <taxon>Pseudomonadota</taxon>
        <taxon>Gammaproteobacteria</taxon>
        <taxon>Pasteurellales</taxon>
        <taxon>Pasteurellaceae</taxon>
        <taxon>Haemophilus</taxon>
    </lineage>
</organism>
<accession>P43702</accession>